<reference key="1">
    <citation type="journal article" date="1995" name="Chromosoma">
        <title>Molecular characterization of the zerknullt region of the Antennapedia complex of D. subobscura.</title>
        <authorList>
            <person name="Terol J."/>
            <person name="Perez-Alonso M."/>
            <person name="de Frutos R."/>
        </authorList>
    </citation>
    <scope>NUCLEOTIDE SEQUENCE [GENOMIC DNA]</scope>
    <source>
        <strain>H271</strain>
    </source>
</reference>
<feature type="chain" id="PRO_0000049015" description="Homeotic protein bicoid">
    <location>
        <begin position="1" status="less than"/>
        <end position="95"/>
    </location>
</feature>
<feature type="region of interest" description="Disordered" evidence="2">
    <location>
        <begin position="1"/>
        <end position="29"/>
    </location>
</feature>
<feature type="region of interest" description="Disordered" evidence="2">
    <location>
        <begin position="42"/>
        <end position="63"/>
    </location>
</feature>
<feature type="non-terminal residue">
    <location>
        <position position="1"/>
    </location>
</feature>
<gene>
    <name type="primary">bcd</name>
</gene>
<dbReference type="EMBL" id="X78058">
    <property type="status" value="NOT_ANNOTATED_CDS"/>
    <property type="molecule type" value="Genomic_DNA"/>
</dbReference>
<dbReference type="EnsemblMetazoa" id="XM_034806982.1">
    <property type="protein sequence ID" value="XP_034662873.1"/>
    <property type="gene ID" value="LOC117897903"/>
</dbReference>
<dbReference type="GO" id="GO:0005634">
    <property type="term" value="C:nucleus"/>
    <property type="evidence" value="ECO:0007669"/>
    <property type="project" value="UniProtKB-SubCell"/>
</dbReference>
<dbReference type="GO" id="GO:0003677">
    <property type="term" value="F:DNA binding"/>
    <property type="evidence" value="ECO:0007669"/>
    <property type="project" value="UniProtKB-KW"/>
</dbReference>
<dbReference type="GO" id="GO:0003723">
    <property type="term" value="F:RNA binding"/>
    <property type="evidence" value="ECO:0007669"/>
    <property type="project" value="UniProtKB-KW"/>
</dbReference>
<sequence length="95" mass="10250">NLEPLKSHTVVGLDKSCDDGSSDDMSTGMRVLSGRGAFAKFGKPSAAQAQPQPPPPPLGMMHDTNQYQCTMDTIMQAYNPHRNAGGNTQFAYCFN</sequence>
<keyword id="KW-0217">Developmental protein</keyword>
<keyword id="KW-0238">DNA-binding</keyword>
<keyword id="KW-0371">Homeobox</keyword>
<keyword id="KW-0539">Nucleus</keyword>
<keyword id="KW-0694">RNA-binding</keyword>
<keyword id="KW-0804">Transcription</keyword>
<keyword id="KW-0805">Transcription regulation</keyword>
<comment type="function">
    <text evidence="1">Bicoid is polarity protein that provides positional cues for the development of head and thoracic segments. BCD regulates the expression of zygotic genes, possibly through its homeodomain, and inhibits the activity of other maternal gene products (By similarity).</text>
</comment>
<comment type="subcellular location">
    <subcellularLocation>
        <location>Nucleus</location>
    </subcellularLocation>
</comment>
<comment type="similarity">
    <text evidence="3">Belongs to the paired homeobox family. Bicoid subfamily.</text>
</comment>
<accession>P55924</accession>
<protein>
    <recommendedName>
        <fullName>Homeotic protein bicoid</fullName>
    </recommendedName>
</protein>
<name>BCD_DROSU</name>
<organism>
    <name type="scientific">Drosophila subobscura</name>
    <name type="common">Fruit fly</name>
    <dbReference type="NCBI Taxonomy" id="7241"/>
    <lineage>
        <taxon>Eukaryota</taxon>
        <taxon>Metazoa</taxon>
        <taxon>Ecdysozoa</taxon>
        <taxon>Arthropoda</taxon>
        <taxon>Hexapoda</taxon>
        <taxon>Insecta</taxon>
        <taxon>Pterygota</taxon>
        <taxon>Neoptera</taxon>
        <taxon>Endopterygota</taxon>
        <taxon>Diptera</taxon>
        <taxon>Brachycera</taxon>
        <taxon>Muscomorpha</taxon>
        <taxon>Ephydroidea</taxon>
        <taxon>Drosophilidae</taxon>
        <taxon>Drosophila</taxon>
        <taxon>Sophophora</taxon>
    </lineage>
</organism>
<evidence type="ECO:0000250" key="1"/>
<evidence type="ECO:0000256" key="2">
    <source>
        <dbReference type="SAM" id="MobiDB-lite"/>
    </source>
</evidence>
<evidence type="ECO:0000305" key="3"/>
<proteinExistence type="inferred from homology"/>